<accession>B9M6G7</accession>
<sequence>MLGKKLHVKKNDTVVVIAGKDKAKTGKVLQILPKKDGILVEGVNITKRHTKPRGSESGSIVEKEAVIHVSNVMIYCSKCDKAVRTRTNTLEDGKKVRVCVKCGEAFDK</sequence>
<evidence type="ECO:0000255" key="1">
    <source>
        <dbReference type="HAMAP-Rule" id="MF_01326"/>
    </source>
</evidence>
<evidence type="ECO:0000305" key="2"/>
<gene>
    <name evidence="1" type="primary">rplX</name>
    <name type="ordered locus">Geob_3614</name>
</gene>
<keyword id="KW-1185">Reference proteome</keyword>
<keyword id="KW-0687">Ribonucleoprotein</keyword>
<keyword id="KW-0689">Ribosomal protein</keyword>
<keyword id="KW-0694">RNA-binding</keyword>
<keyword id="KW-0699">rRNA-binding</keyword>
<dbReference type="EMBL" id="CP001390">
    <property type="protein sequence ID" value="ACM21955.1"/>
    <property type="molecule type" value="Genomic_DNA"/>
</dbReference>
<dbReference type="RefSeq" id="WP_012648683.1">
    <property type="nucleotide sequence ID" value="NC_011979.1"/>
</dbReference>
<dbReference type="SMR" id="B9M6G7"/>
<dbReference type="STRING" id="316067.Geob_3614"/>
<dbReference type="KEGG" id="geo:Geob_3614"/>
<dbReference type="eggNOG" id="COG0198">
    <property type="taxonomic scope" value="Bacteria"/>
</dbReference>
<dbReference type="HOGENOM" id="CLU_093315_2_3_7"/>
<dbReference type="OrthoDB" id="9807419at2"/>
<dbReference type="Proteomes" id="UP000007721">
    <property type="component" value="Chromosome"/>
</dbReference>
<dbReference type="GO" id="GO:1990904">
    <property type="term" value="C:ribonucleoprotein complex"/>
    <property type="evidence" value="ECO:0007669"/>
    <property type="project" value="UniProtKB-KW"/>
</dbReference>
<dbReference type="GO" id="GO:0005840">
    <property type="term" value="C:ribosome"/>
    <property type="evidence" value="ECO:0007669"/>
    <property type="project" value="UniProtKB-KW"/>
</dbReference>
<dbReference type="GO" id="GO:0019843">
    <property type="term" value="F:rRNA binding"/>
    <property type="evidence" value="ECO:0007669"/>
    <property type="project" value="UniProtKB-UniRule"/>
</dbReference>
<dbReference type="GO" id="GO:0003735">
    <property type="term" value="F:structural constituent of ribosome"/>
    <property type="evidence" value="ECO:0007669"/>
    <property type="project" value="InterPro"/>
</dbReference>
<dbReference type="GO" id="GO:0006412">
    <property type="term" value="P:translation"/>
    <property type="evidence" value="ECO:0007669"/>
    <property type="project" value="UniProtKB-UniRule"/>
</dbReference>
<dbReference type="CDD" id="cd06089">
    <property type="entry name" value="KOW_RPL26"/>
    <property type="match status" value="1"/>
</dbReference>
<dbReference type="FunFam" id="2.30.30.30:FF:000004">
    <property type="entry name" value="50S ribosomal protein L24"/>
    <property type="match status" value="1"/>
</dbReference>
<dbReference type="Gene3D" id="2.30.30.30">
    <property type="match status" value="1"/>
</dbReference>
<dbReference type="HAMAP" id="MF_01326_B">
    <property type="entry name" value="Ribosomal_uL24_B"/>
    <property type="match status" value="1"/>
</dbReference>
<dbReference type="InterPro" id="IPR005824">
    <property type="entry name" value="KOW"/>
</dbReference>
<dbReference type="InterPro" id="IPR014722">
    <property type="entry name" value="Rib_uL2_dom2"/>
</dbReference>
<dbReference type="InterPro" id="IPR003256">
    <property type="entry name" value="Ribosomal_uL24"/>
</dbReference>
<dbReference type="InterPro" id="IPR041988">
    <property type="entry name" value="Ribosomal_uL24_KOW"/>
</dbReference>
<dbReference type="InterPro" id="IPR008991">
    <property type="entry name" value="Translation_prot_SH3-like_sf"/>
</dbReference>
<dbReference type="NCBIfam" id="TIGR01079">
    <property type="entry name" value="rplX_bact"/>
    <property type="match status" value="1"/>
</dbReference>
<dbReference type="PANTHER" id="PTHR12903">
    <property type="entry name" value="MITOCHONDRIAL RIBOSOMAL PROTEIN L24"/>
    <property type="match status" value="1"/>
</dbReference>
<dbReference type="Pfam" id="PF00467">
    <property type="entry name" value="KOW"/>
    <property type="match status" value="1"/>
</dbReference>
<dbReference type="Pfam" id="PF17136">
    <property type="entry name" value="ribosomal_L24"/>
    <property type="match status" value="1"/>
</dbReference>
<dbReference type="SMART" id="SM00739">
    <property type="entry name" value="KOW"/>
    <property type="match status" value="1"/>
</dbReference>
<dbReference type="SUPFAM" id="SSF50104">
    <property type="entry name" value="Translation proteins SH3-like domain"/>
    <property type="match status" value="1"/>
</dbReference>
<reference key="1">
    <citation type="submission" date="2009-01" db="EMBL/GenBank/DDBJ databases">
        <title>Complete sequence of Geobacter sp. FRC-32.</title>
        <authorList>
            <consortium name="US DOE Joint Genome Institute"/>
            <person name="Lucas S."/>
            <person name="Copeland A."/>
            <person name="Lapidus A."/>
            <person name="Glavina del Rio T."/>
            <person name="Dalin E."/>
            <person name="Tice H."/>
            <person name="Bruce D."/>
            <person name="Goodwin L."/>
            <person name="Pitluck S."/>
            <person name="Saunders E."/>
            <person name="Brettin T."/>
            <person name="Detter J.C."/>
            <person name="Han C."/>
            <person name="Larimer F."/>
            <person name="Land M."/>
            <person name="Hauser L."/>
            <person name="Kyrpides N."/>
            <person name="Ovchinnikova G."/>
            <person name="Kostka J."/>
            <person name="Richardson P."/>
        </authorList>
    </citation>
    <scope>NUCLEOTIDE SEQUENCE [LARGE SCALE GENOMIC DNA]</scope>
    <source>
        <strain>DSM 22248 / JCM 15807 / FRC-32</strain>
    </source>
</reference>
<comment type="function">
    <text evidence="1">One of two assembly initiator proteins, it binds directly to the 5'-end of the 23S rRNA, where it nucleates assembly of the 50S subunit.</text>
</comment>
<comment type="function">
    <text evidence="1">One of the proteins that surrounds the polypeptide exit tunnel on the outside of the subunit.</text>
</comment>
<comment type="subunit">
    <text evidence="1">Part of the 50S ribosomal subunit.</text>
</comment>
<comment type="similarity">
    <text evidence="1">Belongs to the universal ribosomal protein uL24 family.</text>
</comment>
<protein>
    <recommendedName>
        <fullName evidence="1">Large ribosomal subunit protein uL24</fullName>
    </recommendedName>
    <alternativeName>
        <fullName evidence="2">50S ribosomal protein L24</fullName>
    </alternativeName>
</protein>
<name>RL24_GEODF</name>
<feature type="chain" id="PRO_1000165947" description="Large ribosomal subunit protein uL24">
    <location>
        <begin position="1"/>
        <end position="108"/>
    </location>
</feature>
<organism>
    <name type="scientific">Geotalea daltonii (strain DSM 22248 / JCM 15807 / FRC-32)</name>
    <name type="common">Geobacter daltonii</name>
    <dbReference type="NCBI Taxonomy" id="316067"/>
    <lineage>
        <taxon>Bacteria</taxon>
        <taxon>Pseudomonadati</taxon>
        <taxon>Thermodesulfobacteriota</taxon>
        <taxon>Desulfuromonadia</taxon>
        <taxon>Geobacterales</taxon>
        <taxon>Geobacteraceae</taxon>
        <taxon>Geotalea</taxon>
    </lineage>
</organism>
<proteinExistence type="inferred from homology"/>